<accession>Q9YHZ7</accession>
<sequence length="617" mass="67671">MSEEQARAEAPAGARQRRRSELEGYSVSLASLKLSPMYPEEEQRTTGGISSTAHYLDGTFNYTTNPDATNSSVDYYSVAPEPQEENLQPLPNGSSSPPVFVPSSPQLSPFLGHPPAGQHTAQQVPYYLEPSGTSIYRSSVLASAGSRVELCSAPGRQDVYTAVGASGPSGASGPSGAIGLVKEIRYCSVCSDYASGYHYGVWSCEGCKAFFKRSIQGHNDYVCPATNQCTIDRNRRKSCQACRLRKCYEVGMMKGGFRKERGGRIIKHNRRPSGLKERERGYSKAQSGSDVREALPQDGQSSSGIGGGVADVVCMSPEQVLLLLLRAEPPTLCSRQKHSRPYSELTIMSLLTNMADRELVHMIAWAKKVPGFQDLSLHDQVQLLESSWLEILMIGLIWRSIYTPGKLIFAQDLILDKSEGECVEGMAEIFDMLLATVARFRTLKLKSEEFVCLKAIILLNSGAFSFCSSPVEPLRDGFMVQCMMDNITDALIYYISQSGISVQLQSRRQAQLLLLLSHIRHMSYKGMEHLYSMKCKNKVPLYDLLLEMLDAHRLRPLGKVPRIWADRVSSSPTTTATTPTTNTTTTTTTTTHHPSNGSTCPADLPSNPPGPGQSPSP</sequence>
<reference key="1">
    <citation type="journal article" date="2000" name="Gen. Comp. Endocrinol.">
        <title>Novel transcripts of the estrogen receptor alpha gene in channel catfish.</title>
        <authorList>
            <person name="Patino R."/>
            <person name="Xia Z."/>
            <person name="Gale W.L."/>
            <person name="Wu C."/>
            <person name="Maule A.G."/>
            <person name="Chang X."/>
        </authorList>
    </citation>
    <scope>NUCLEOTIDE SEQUENCE [MRNA]</scope>
    <scope>ALTERNATIVE SPLICING</scope>
    <source>
        <tissue>Liver</tissue>
        <tissue>Ovary</tissue>
    </source>
</reference>
<reference key="2">
    <citation type="journal article" date="2000" name="Gen. Comp. Endocrinol.">
        <title>Phylogenetic sequence analysis, recombinant expression, and tissue distribution of a channel catfish estrogen receptor beta.</title>
        <authorList>
            <person name="Xia Z."/>
            <person name="Gale W.L."/>
            <person name="Chang X."/>
            <person name="Langenau D."/>
            <person name="Patino R."/>
            <person name="Maule A.G."/>
            <person name="Densmore L.D."/>
        </authorList>
    </citation>
    <scope>TISSUE SPECIFICITY</scope>
</reference>
<evidence type="ECO:0000250" key="1"/>
<evidence type="ECO:0000255" key="2">
    <source>
        <dbReference type="PROSITE-ProRule" id="PRU00407"/>
    </source>
</evidence>
<evidence type="ECO:0000255" key="3">
    <source>
        <dbReference type="PROSITE-ProRule" id="PRU01189"/>
    </source>
</evidence>
<evidence type="ECO:0000256" key="4">
    <source>
        <dbReference type="SAM" id="MobiDB-lite"/>
    </source>
</evidence>
<evidence type="ECO:0000269" key="5">
    <source>
    </source>
</evidence>
<evidence type="ECO:0000305" key="6"/>
<feature type="chain" id="PRO_0000053629" description="Estrogen receptor">
    <location>
        <begin position="1"/>
        <end position="617"/>
    </location>
</feature>
<feature type="domain" description="NR LBD" evidence="3">
    <location>
        <begin position="316"/>
        <end position="552"/>
    </location>
</feature>
<feature type="DNA-binding region" description="Nuclear receptor" evidence="2">
    <location>
        <begin position="187"/>
        <end position="252"/>
    </location>
</feature>
<feature type="zinc finger region" description="NR C4-type" evidence="2">
    <location>
        <begin position="187"/>
        <end position="207"/>
    </location>
</feature>
<feature type="zinc finger region" description="NR C4-type" evidence="2">
    <location>
        <begin position="223"/>
        <end position="247"/>
    </location>
</feature>
<feature type="region of interest" description="Modulating">
    <location>
        <begin position="1"/>
        <end position="186"/>
    </location>
</feature>
<feature type="region of interest" description="Disordered" evidence="4">
    <location>
        <begin position="1"/>
        <end position="54"/>
    </location>
</feature>
<feature type="region of interest" description="Hinge">
    <location>
        <begin position="253"/>
        <end position="315"/>
    </location>
</feature>
<feature type="region of interest" description="Disordered" evidence="4">
    <location>
        <begin position="269"/>
        <end position="303"/>
    </location>
</feature>
<feature type="region of interest" description="Disordered" evidence="4">
    <location>
        <begin position="568"/>
        <end position="617"/>
    </location>
</feature>
<feature type="compositionally biased region" description="Low complexity" evidence="4">
    <location>
        <begin position="573"/>
        <end position="591"/>
    </location>
</feature>
<feature type="compositionally biased region" description="Pro residues" evidence="4">
    <location>
        <begin position="606"/>
        <end position="617"/>
    </location>
</feature>
<feature type="splice variant" id="VSP_003682" description="In isoform 3." evidence="6">
    <location>
        <begin position="1"/>
        <end position="425"/>
    </location>
</feature>
<feature type="splice variant" id="VSP_003681" description="In isoform 2." evidence="6">
    <location>
        <begin position="1"/>
        <end position="36"/>
    </location>
</feature>
<comment type="function">
    <text>The steroid hormones and their receptors are involved in the regulation of eukaryotic gene expression and affect cellular proliferation and differentiation in target tissues.</text>
</comment>
<comment type="subunit">
    <text evidence="1">Binds DNA as a homodimer. Can form a heterodimer with ER-beta (By similarity).</text>
</comment>
<comment type="subcellular location">
    <subcellularLocation>
        <location>Nucleus</location>
    </subcellularLocation>
</comment>
<comment type="alternative products">
    <event type="alternative splicing"/>
    <isoform>
        <id>Q9YHZ7-1</id>
        <name>1</name>
        <sequence type="displayed"/>
    </isoform>
    <isoform>
        <id>Q9YHZ7-2</id>
        <name>2</name>
        <sequence type="described" ref="VSP_003681"/>
    </isoform>
    <isoform>
        <id>Q9YHZ7-3</id>
        <name>3</name>
        <sequence type="described" ref="VSP_003682"/>
    </isoform>
</comment>
<comment type="tissue specificity">
    <text evidence="5">Ovary and testis.</text>
</comment>
<comment type="domain">
    <text>Composed of three domains: a modulating N-terminal domain, a DNA-binding domain and a C-terminal ligand-binding domain.</text>
</comment>
<comment type="similarity">
    <text evidence="6">Belongs to the nuclear hormone receptor family. NR3 subfamily.</text>
</comment>
<proteinExistence type="evidence at transcript level"/>
<organism>
    <name type="scientific">Ictalurus punctatus</name>
    <name type="common">Channel catfish</name>
    <name type="synonym">Silurus punctatus</name>
    <dbReference type="NCBI Taxonomy" id="7998"/>
    <lineage>
        <taxon>Eukaryota</taxon>
        <taxon>Metazoa</taxon>
        <taxon>Chordata</taxon>
        <taxon>Craniata</taxon>
        <taxon>Vertebrata</taxon>
        <taxon>Euteleostomi</taxon>
        <taxon>Actinopterygii</taxon>
        <taxon>Neopterygii</taxon>
        <taxon>Teleostei</taxon>
        <taxon>Ostariophysi</taxon>
        <taxon>Siluriformes</taxon>
        <taxon>Ictaluridae</taxon>
        <taxon>Ictalurus</taxon>
    </lineage>
</organism>
<protein>
    <recommendedName>
        <fullName>Estrogen receptor</fullName>
        <shortName>ER</shortName>
    </recommendedName>
    <alternativeName>
        <fullName>ER-alpha</fullName>
    </alternativeName>
    <alternativeName>
        <fullName>Estradiol receptor</fullName>
    </alternativeName>
    <alternativeName>
        <fullName>Nuclear receptor subfamily 3 group A member 1</fullName>
    </alternativeName>
</protein>
<gene>
    <name type="primary">esr1</name>
    <name type="synonym">esr</name>
    <name type="synonym">nr3a1</name>
</gene>
<name>ESR1_ICTPU</name>
<keyword id="KW-0025">Alternative splicing</keyword>
<keyword id="KW-0238">DNA-binding</keyword>
<keyword id="KW-0446">Lipid-binding</keyword>
<keyword id="KW-0479">Metal-binding</keyword>
<keyword id="KW-0539">Nucleus</keyword>
<keyword id="KW-0675">Receptor</keyword>
<keyword id="KW-0754">Steroid-binding</keyword>
<keyword id="KW-0804">Transcription</keyword>
<keyword id="KW-0805">Transcription regulation</keyword>
<keyword id="KW-0862">Zinc</keyword>
<keyword id="KW-0863">Zinc-finger</keyword>
<dbReference type="EMBL" id="AF253505">
    <property type="protein sequence ID" value="AAG24543.1"/>
    <property type="molecule type" value="mRNA"/>
</dbReference>
<dbReference type="EMBL" id="AF061275">
    <property type="protein sequence ID" value="AAC69548.1"/>
    <property type="molecule type" value="mRNA"/>
</dbReference>
<dbReference type="EMBL" id="AF253506">
    <property type="protein sequence ID" value="AAG24544.1"/>
    <property type="molecule type" value="mRNA"/>
</dbReference>
<dbReference type="RefSeq" id="NP_001187003.1">
    <molecule id="Q9YHZ7-1"/>
    <property type="nucleotide sequence ID" value="NM_001200074.1"/>
</dbReference>
<dbReference type="RefSeq" id="XP_017310819.1">
    <molecule id="Q9YHZ7-1"/>
    <property type="nucleotide sequence ID" value="XM_017455330.3"/>
</dbReference>
<dbReference type="SMR" id="Q9YHZ7"/>
<dbReference type="STRING" id="7998.ENSIPUP00000028831"/>
<dbReference type="GeneID" id="100304474"/>
<dbReference type="KEGG" id="ipu:100304474"/>
<dbReference type="CTD" id="2099"/>
<dbReference type="OrthoDB" id="5799427at2759"/>
<dbReference type="Proteomes" id="UP000221080">
    <property type="component" value="Chromosome 25"/>
</dbReference>
<dbReference type="GO" id="GO:0005634">
    <property type="term" value="C:nucleus"/>
    <property type="evidence" value="ECO:0000250"/>
    <property type="project" value="UniProtKB"/>
</dbReference>
<dbReference type="GO" id="GO:0042562">
    <property type="term" value="F:hormone binding"/>
    <property type="evidence" value="ECO:0000314"/>
    <property type="project" value="AgBase"/>
</dbReference>
<dbReference type="GO" id="GO:0030284">
    <property type="term" value="F:nuclear estrogen receptor activity"/>
    <property type="evidence" value="ECO:0000314"/>
    <property type="project" value="AgBase"/>
</dbReference>
<dbReference type="GO" id="GO:0043565">
    <property type="term" value="F:sequence-specific DNA binding"/>
    <property type="evidence" value="ECO:0007669"/>
    <property type="project" value="InterPro"/>
</dbReference>
<dbReference type="GO" id="GO:0005496">
    <property type="term" value="F:steroid binding"/>
    <property type="evidence" value="ECO:0007669"/>
    <property type="project" value="UniProtKB-KW"/>
</dbReference>
<dbReference type="GO" id="GO:0008270">
    <property type="term" value="F:zinc ion binding"/>
    <property type="evidence" value="ECO:0007669"/>
    <property type="project" value="UniProtKB-KW"/>
</dbReference>
<dbReference type="GO" id="GO:0071392">
    <property type="term" value="P:cellular response to estradiol stimulus"/>
    <property type="evidence" value="ECO:0000315"/>
    <property type="project" value="AgBase"/>
</dbReference>
<dbReference type="GO" id="GO:0030520">
    <property type="term" value="P:estrogen receptor signaling pathway"/>
    <property type="evidence" value="ECO:0000315"/>
    <property type="project" value="AgBase"/>
</dbReference>
<dbReference type="GO" id="GO:0050776">
    <property type="term" value="P:regulation of immune response"/>
    <property type="evidence" value="ECO:0000315"/>
    <property type="project" value="AgBase"/>
</dbReference>
<dbReference type="CDD" id="cd07171">
    <property type="entry name" value="NR_DBD_ER"/>
    <property type="match status" value="1"/>
</dbReference>
<dbReference type="CDD" id="cd06949">
    <property type="entry name" value="NR_LBD_ER"/>
    <property type="match status" value="1"/>
</dbReference>
<dbReference type="FunFam" id="1.10.565.10:FF:000010">
    <property type="entry name" value="Estrogen receptor"/>
    <property type="match status" value="1"/>
</dbReference>
<dbReference type="FunFam" id="3.30.50.10:FF:000014">
    <property type="entry name" value="Estrogen receptor beta"/>
    <property type="match status" value="1"/>
</dbReference>
<dbReference type="Gene3D" id="3.30.50.10">
    <property type="entry name" value="Erythroid Transcription Factor GATA-1, subunit A"/>
    <property type="match status" value="1"/>
</dbReference>
<dbReference type="Gene3D" id="1.10.565.10">
    <property type="entry name" value="Retinoid X Receptor"/>
    <property type="match status" value="1"/>
</dbReference>
<dbReference type="InterPro" id="IPR024178">
    <property type="entry name" value="Est_rcpt/est-rel_rcp"/>
</dbReference>
<dbReference type="InterPro" id="IPR001292">
    <property type="entry name" value="Estr_rcpt"/>
</dbReference>
<dbReference type="InterPro" id="IPR046944">
    <property type="entry name" value="Estr_rcpt_N"/>
</dbReference>
<dbReference type="InterPro" id="IPR035500">
    <property type="entry name" value="NHR-like_dom_sf"/>
</dbReference>
<dbReference type="InterPro" id="IPR000536">
    <property type="entry name" value="Nucl_hrmn_rcpt_lig-bd"/>
</dbReference>
<dbReference type="InterPro" id="IPR050200">
    <property type="entry name" value="Nuclear_hormone_rcpt_NR3"/>
</dbReference>
<dbReference type="InterPro" id="IPR001723">
    <property type="entry name" value="Nuclear_hrmn_rcpt"/>
</dbReference>
<dbReference type="InterPro" id="IPR001628">
    <property type="entry name" value="Znf_hrmn_rcpt"/>
</dbReference>
<dbReference type="InterPro" id="IPR013088">
    <property type="entry name" value="Znf_NHR/GATA"/>
</dbReference>
<dbReference type="PANTHER" id="PTHR48092">
    <property type="entry name" value="KNIRPS-RELATED PROTEIN-RELATED"/>
    <property type="match status" value="1"/>
</dbReference>
<dbReference type="Pfam" id="PF00104">
    <property type="entry name" value="Hormone_recep"/>
    <property type="match status" value="1"/>
</dbReference>
<dbReference type="Pfam" id="PF02159">
    <property type="entry name" value="Oest_recep"/>
    <property type="match status" value="1"/>
</dbReference>
<dbReference type="Pfam" id="PF00105">
    <property type="entry name" value="zf-C4"/>
    <property type="match status" value="1"/>
</dbReference>
<dbReference type="PIRSF" id="PIRSF500101">
    <property type="entry name" value="ER-a"/>
    <property type="match status" value="1"/>
</dbReference>
<dbReference type="PIRSF" id="PIRSF002527">
    <property type="entry name" value="ER-like_NR"/>
    <property type="match status" value="1"/>
</dbReference>
<dbReference type="PRINTS" id="PR00398">
    <property type="entry name" value="STRDHORMONER"/>
</dbReference>
<dbReference type="PRINTS" id="PR00047">
    <property type="entry name" value="STROIDFINGER"/>
</dbReference>
<dbReference type="SMART" id="SM00430">
    <property type="entry name" value="HOLI"/>
    <property type="match status" value="1"/>
</dbReference>
<dbReference type="SMART" id="SM00399">
    <property type="entry name" value="ZnF_C4"/>
    <property type="match status" value="1"/>
</dbReference>
<dbReference type="SUPFAM" id="SSF57716">
    <property type="entry name" value="Glucocorticoid receptor-like (DNA-binding domain)"/>
    <property type="match status" value="1"/>
</dbReference>
<dbReference type="SUPFAM" id="SSF48508">
    <property type="entry name" value="Nuclear receptor ligand-binding domain"/>
    <property type="match status" value="1"/>
</dbReference>
<dbReference type="PROSITE" id="PS51843">
    <property type="entry name" value="NR_LBD"/>
    <property type="match status" value="1"/>
</dbReference>
<dbReference type="PROSITE" id="PS00031">
    <property type="entry name" value="NUCLEAR_REC_DBD_1"/>
    <property type="match status" value="1"/>
</dbReference>
<dbReference type="PROSITE" id="PS51030">
    <property type="entry name" value="NUCLEAR_REC_DBD_2"/>
    <property type="match status" value="1"/>
</dbReference>